<sequence length="311" mass="33650">MSTEKLTVALLSGGASAEREVSLKSGEQVFNALDKQRYLVLRYDPAHDLTRLAADAEKIDVALIILHGRMGEDGTIQGLLESLGIPYQGSGVLGSAVAMNKILSKQLYIHAGLPVAPHLVADRREPPDLDTVADRLGLPVVVKPEHEGSSIGLSIVRNRDQLAAAVETGWQYDRRCLIEKYVHGIEITGGVLGNDHLQALPLIEIIPGEAYEFFDYKAKYTPGASREICPARLSDTITAKAQEYARKAHQALCCKGYSRTDMIVSGNDIFILETNTIPGMTATSLFPQAAAVAGISFSALLDRLIELALED</sequence>
<feature type="chain" id="PRO_1000074802" description="D-alanine--D-alanine ligase">
    <location>
        <begin position="1"/>
        <end position="311"/>
    </location>
</feature>
<feature type="domain" description="ATP-grasp" evidence="2">
    <location>
        <begin position="105"/>
        <end position="306"/>
    </location>
</feature>
<feature type="binding site" evidence="2">
    <location>
        <begin position="133"/>
        <end position="188"/>
    </location>
    <ligand>
        <name>ATP</name>
        <dbReference type="ChEBI" id="CHEBI:30616"/>
    </ligand>
</feature>
<feature type="binding site" evidence="2">
    <location>
        <position position="261"/>
    </location>
    <ligand>
        <name>Mg(2+)</name>
        <dbReference type="ChEBI" id="CHEBI:18420"/>
        <label>1</label>
    </ligand>
</feature>
<feature type="binding site" evidence="2">
    <location>
        <position position="273"/>
    </location>
    <ligand>
        <name>Mg(2+)</name>
        <dbReference type="ChEBI" id="CHEBI:18420"/>
        <label>1</label>
    </ligand>
</feature>
<feature type="binding site" evidence="2">
    <location>
        <position position="273"/>
    </location>
    <ligand>
        <name>Mg(2+)</name>
        <dbReference type="ChEBI" id="CHEBI:18420"/>
        <label>2</label>
    </ligand>
</feature>
<feature type="binding site" evidence="2">
    <location>
        <position position="275"/>
    </location>
    <ligand>
        <name>Mg(2+)</name>
        <dbReference type="ChEBI" id="CHEBI:18420"/>
        <label>2</label>
    </ligand>
</feature>
<dbReference type="EC" id="6.3.2.4" evidence="2"/>
<dbReference type="EMBL" id="CP000478">
    <property type="protein sequence ID" value="ABK19767.1"/>
    <property type="molecule type" value="Genomic_DNA"/>
</dbReference>
<dbReference type="RefSeq" id="WP_011700880.1">
    <property type="nucleotide sequence ID" value="NC_008554.1"/>
</dbReference>
<dbReference type="SMR" id="A0LQR5"/>
<dbReference type="FunCoup" id="A0LQR5">
    <property type="interactions" value="297"/>
</dbReference>
<dbReference type="STRING" id="335543.Sfum_4102"/>
<dbReference type="KEGG" id="sfu:Sfum_4102"/>
<dbReference type="eggNOG" id="COG1181">
    <property type="taxonomic scope" value="Bacteria"/>
</dbReference>
<dbReference type="HOGENOM" id="CLU_039268_1_1_7"/>
<dbReference type="InParanoid" id="A0LQR5"/>
<dbReference type="OrthoDB" id="9813261at2"/>
<dbReference type="UniPathway" id="UPA00219"/>
<dbReference type="Proteomes" id="UP000001784">
    <property type="component" value="Chromosome"/>
</dbReference>
<dbReference type="GO" id="GO:0005737">
    <property type="term" value="C:cytoplasm"/>
    <property type="evidence" value="ECO:0007669"/>
    <property type="project" value="UniProtKB-SubCell"/>
</dbReference>
<dbReference type="GO" id="GO:0005524">
    <property type="term" value="F:ATP binding"/>
    <property type="evidence" value="ECO:0007669"/>
    <property type="project" value="UniProtKB-KW"/>
</dbReference>
<dbReference type="GO" id="GO:0008716">
    <property type="term" value="F:D-alanine-D-alanine ligase activity"/>
    <property type="evidence" value="ECO:0007669"/>
    <property type="project" value="UniProtKB-UniRule"/>
</dbReference>
<dbReference type="GO" id="GO:0046872">
    <property type="term" value="F:metal ion binding"/>
    <property type="evidence" value="ECO:0007669"/>
    <property type="project" value="UniProtKB-KW"/>
</dbReference>
<dbReference type="GO" id="GO:0071555">
    <property type="term" value="P:cell wall organization"/>
    <property type="evidence" value="ECO:0007669"/>
    <property type="project" value="UniProtKB-KW"/>
</dbReference>
<dbReference type="GO" id="GO:0009252">
    <property type="term" value="P:peptidoglycan biosynthetic process"/>
    <property type="evidence" value="ECO:0007669"/>
    <property type="project" value="UniProtKB-UniRule"/>
</dbReference>
<dbReference type="GO" id="GO:0008360">
    <property type="term" value="P:regulation of cell shape"/>
    <property type="evidence" value="ECO:0007669"/>
    <property type="project" value="UniProtKB-KW"/>
</dbReference>
<dbReference type="Gene3D" id="3.40.50.20">
    <property type="match status" value="1"/>
</dbReference>
<dbReference type="Gene3D" id="3.30.1490.20">
    <property type="entry name" value="ATP-grasp fold, A domain"/>
    <property type="match status" value="1"/>
</dbReference>
<dbReference type="Gene3D" id="3.30.470.20">
    <property type="entry name" value="ATP-grasp fold, B domain"/>
    <property type="match status" value="1"/>
</dbReference>
<dbReference type="HAMAP" id="MF_00047">
    <property type="entry name" value="Dala_Dala_lig"/>
    <property type="match status" value="1"/>
</dbReference>
<dbReference type="InterPro" id="IPR011761">
    <property type="entry name" value="ATP-grasp"/>
</dbReference>
<dbReference type="InterPro" id="IPR013815">
    <property type="entry name" value="ATP_grasp_subdomain_1"/>
</dbReference>
<dbReference type="InterPro" id="IPR000291">
    <property type="entry name" value="D-Ala_lig_Van_CS"/>
</dbReference>
<dbReference type="InterPro" id="IPR005905">
    <property type="entry name" value="D_ala_D_ala"/>
</dbReference>
<dbReference type="InterPro" id="IPR011095">
    <property type="entry name" value="Dala_Dala_lig_C"/>
</dbReference>
<dbReference type="InterPro" id="IPR011127">
    <property type="entry name" value="Dala_Dala_lig_N"/>
</dbReference>
<dbReference type="InterPro" id="IPR016185">
    <property type="entry name" value="PreATP-grasp_dom_sf"/>
</dbReference>
<dbReference type="NCBIfam" id="TIGR01205">
    <property type="entry name" value="D_ala_D_alaTIGR"/>
    <property type="match status" value="1"/>
</dbReference>
<dbReference type="NCBIfam" id="NF002378">
    <property type="entry name" value="PRK01372.1"/>
    <property type="match status" value="1"/>
</dbReference>
<dbReference type="NCBIfam" id="NF002528">
    <property type="entry name" value="PRK01966.1-4"/>
    <property type="match status" value="1"/>
</dbReference>
<dbReference type="PANTHER" id="PTHR23132">
    <property type="entry name" value="D-ALANINE--D-ALANINE LIGASE"/>
    <property type="match status" value="1"/>
</dbReference>
<dbReference type="PANTHER" id="PTHR23132:SF23">
    <property type="entry name" value="D-ALANINE--D-ALANINE LIGASE B"/>
    <property type="match status" value="1"/>
</dbReference>
<dbReference type="Pfam" id="PF07478">
    <property type="entry name" value="Dala_Dala_lig_C"/>
    <property type="match status" value="1"/>
</dbReference>
<dbReference type="Pfam" id="PF01820">
    <property type="entry name" value="Dala_Dala_lig_N"/>
    <property type="match status" value="1"/>
</dbReference>
<dbReference type="PIRSF" id="PIRSF039102">
    <property type="entry name" value="Ddl/VanB"/>
    <property type="match status" value="1"/>
</dbReference>
<dbReference type="SUPFAM" id="SSF56059">
    <property type="entry name" value="Glutathione synthetase ATP-binding domain-like"/>
    <property type="match status" value="1"/>
</dbReference>
<dbReference type="SUPFAM" id="SSF52440">
    <property type="entry name" value="PreATP-grasp domain"/>
    <property type="match status" value="1"/>
</dbReference>
<dbReference type="PROSITE" id="PS50975">
    <property type="entry name" value="ATP_GRASP"/>
    <property type="match status" value="1"/>
</dbReference>
<dbReference type="PROSITE" id="PS00843">
    <property type="entry name" value="DALA_DALA_LIGASE_1"/>
    <property type="match status" value="1"/>
</dbReference>
<dbReference type="PROSITE" id="PS00844">
    <property type="entry name" value="DALA_DALA_LIGASE_2"/>
    <property type="match status" value="1"/>
</dbReference>
<organism>
    <name type="scientific">Syntrophobacter fumaroxidans (strain DSM 10017 / MPOB)</name>
    <dbReference type="NCBI Taxonomy" id="335543"/>
    <lineage>
        <taxon>Bacteria</taxon>
        <taxon>Pseudomonadati</taxon>
        <taxon>Thermodesulfobacteriota</taxon>
        <taxon>Syntrophobacteria</taxon>
        <taxon>Syntrophobacterales</taxon>
        <taxon>Syntrophobacteraceae</taxon>
        <taxon>Syntrophobacter</taxon>
    </lineage>
</organism>
<proteinExistence type="inferred from homology"/>
<gene>
    <name evidence="2" type="primary">ddl</name>
    <name type="ordered locus">Sfum_4102</name>
</gene>
<comment type="function">
    <text evidence="2">Cell wall formation.</text>
</comment>
<comment type="catalytic activity">
    <reaction evidence="2">
        <text>2 D-alanine + ATP = D-alanyl-D-alanine + ADP + phosphate + H(+)</text>
        <dbReference type="Rhea" id="RHEA:11224"/>
        <dbReference type="ChEBI" id="CHEBI:15378"/>
        <dbReference type="ChEBI" id="CHEBI:30616"/>
        <dbReference type="ChEBI" id="CHEBI:43474"/>
        <dbReference type="ChEBI" id="CHEBI:57416"/>
        <dbReference type="ChEBI" id="CHEBI:57822"/>
        <dbReference type="ChEBI" id="CHEBI:456216"/>
        <dbReference type="EC" id="6.3.2.4"/>
    </reaction>
</comment>
<comment type="cofactor">
    <cofactor evidence="1">
        <name>Mg(2+)</name>
        <dbReference type="ChEBI" id="CHEBI:18420"/>
    </cofactor>
    <cofactor evidence="1">
        <name>Mn(2+)</name>
        <dbReference type="ChEBI" id="CHEBI:29035"/>
    </cofactor>
    <text evidence="1">Binds 2 magnesium or manganese ions per subunit.</text>
</comment>
<comment type="pathway">
    <text evidence="2">Cell wall biogenesis; peptidoglycan biosynthesis.</text>
</comment>
<comment type="subcellular location">
    <subcellularLocation>
        <location evidence="2">Cytoplasm</location>
    </subcellularLocation>
</comment>
<comment type="similarity">
    <text evidence="2">Belongs to the D-alanine--D-alanine ligase family.</text>
</comment>
<evidence type="ECO:0000250" key="1"/>
<evidence type="ECO:0000255" key="2">
    <source>
        <dbReference type="HAMAP-Rule" id="MF_00047"/>
    </source>
</evidence>
<name>DDL_SYNFM</name>
<keyword id="KW-0067">ATP-binding</keyword>
<keyword id="KW-0133">Cell shape</keyword>
<keyword id="KW-0961">Cell wall biogenesis/degradation</keyword>
<keyword id="KW-0963">Cytoplasm</keyword>
<keyword id="KW-0436">Ligase</keyword>
<keyword id="KW-0460">Magnesium</keyword>
<keyword id="KW-0464">Manganese</keyword>
<keyword id="KW-0479">Metal-binding</keyword>
<keyword id="KW-0547">Nucleotide-binding</keyword>
<keyword id="KW-0573">Peptidoglycan synthesis</keyword>
<keyword id="KW-1185">Reference proteome</keyword>
<reference key="1">
    <citation type="submission" date="2006-10" db="EMBL/GenBank/DDBJ databases">
        <title>Complete sequence of Syntrophobacter fumaroxidans MPOB.</title>
        <authorList>
            <consortium name="US DOE Joint Genome Institute"/>
            <person name="Copeland A."/>
            <person name="Lucas S."/>
            <person name="Lapidus A."/>
            <person name="Barry K."/>
            <person name="Detter J.C."/>
            <person name="Glavina del Rio T."/>
            <person name="Hammon N."/>
            <person name="Israni S."/>
            <person name="Pitluck S."/>
            <person name="Goltsman E.G."/>
            <person name="Martinez M."/>
            <person name="Schmutz J."/>
            <person name="Larimer F."/>
            <person name="Land M."/>
            <person name="Hauser L."/>
            <person name="Kyrpides N."/>
            <person name="Kim E."/>
            <person name="Boone D.R."/>
            <person name="Brockman F."/>
            <person name="Culley D."/>
            <person name="Ferry J."/>
            <person name="Gunsalus R."/>
            <person name="McInerney M.J."/>
            <person name="Morrison M."/>
            <person name="Plugge C."/>
            <person name="Rohlin L."/>
            <person name="Scholten J."/>
            <person name="Sieber J."/>
            <person name="Stams A.J.M."/>
            <person name="Worm P."/>
            <person name="Henstra A.M."/>
            <person name="Richardson P."/>
        </authorList>
    </citation>
    <scope>NUCLEOTIDE SEQUENCE [LARGE SCALE GENOMIC DNA]</scope>
    <source>
        <strain>DSM 10017 / MPOB</strain>
    </source>
</reference>
<accession>A0LQR5</accession>
<protein>
    <recommendedName>
        <fullName evidence="2">D-alanine--D-alanine ligase</fullName>
        <ecNumber evidence="2">6.3.2.4</ecNumber>
    </recommendedName>
    <alternativeName>
        <fullName evidence="2">D-Ala-D-Ala ligase</fullName>
    </alternativeName>
    <alternativeName>
        <fullName evidence="2">D-alanylalanine synthetase</fullName>
    </alternativeName>
</protein>